<sequence>MTKYIFVTGGVVSSIGKGITAASLGRLLKNRGLSVTIQKFDPYINVDPGTMSPYQHGEVYVTDDGAETDLDLGHYERFIDINLNKYSNVTTGKVYSEVIKKERRGDYLGGTVQVIPHITNELKDRVFRAARMTNSDIIITEIGGTVGDIESLPFLEAIRQIKSDVGAENVLYIHTTLIPYIKAAGEMKTKPTQHSVKELRSLGIQPNIIVVRTEQPVSQEMKDKIALFCDIKASEVIESRDEETLYNVPLSLQKQKMDDIVLEHLQLEAPQAEMTDWKNLVHRVKNLSKKVRIGLVGKYVSLQDAYLSVAEALRHAGYDHDAEIEIDWIDSEKVTKENVAEIMKDVDGILVPGGFGDRAIEGKIAAIEYARVNKVPYFGICLGMQLATVEFARNVLGLEGAHSAEIEPETKHNIIDLLPEQKNIENMGGTLRLGLYPARIKQGTKAEAAYGTTLVEERHRHRYEFNNEYREQMEEAGMIVSATSPDGRLVEVVELADHPWFVACQYHPEFISRPNRPQSLFKDFVGAALNNK</sequence>
<gene>
    <name evidence="1" type="primary">pyrG</name>
    <name type="ordered locus">LMOf2365_2531</name>
</gene>
<comment type="function">
    <text evidence="1">Catalyzes the ATP-dependent amination of UTP to CTP with either L-glutamine or ammonia as the source of nitrogen. Regulates intracellular CTP levels through interactions with the four ribonucleotide triphosphates.</text>
</comment>
<comment type="catalytic activity">
    <reaction evidence="1">
        <text>UTP + L-glutamine + ATP + H2O = CTP + L-glutamate + ADP + phosphate + 2 H(+)</text>
        <dbReference type="Rhea" id="RHEA:26426"/>
        <dbReference type="ChEBI" id="CHEBI:15377"/>
        <dbReference type="ChEBI" id="CHEBI:15378"/>
        <dbReference type="ChEBI" id="CHEBI:29985"/>
        <dbReference type="ChEBI" id="CHEBI:30616"/>
        <dbReference type="ChEBI" id="CHEBI:37563"/>
        <dbReference type="ChEBI" id="CHEBI:43474"/>
        <dbReference type="ChEBI" id="CHEBI:46398"/>
        <dbReference type="ChEBI" id="CHEBI:58359"/>
        <dbReference type="ChEBI" id="CHEBI:456216"/>
        <dbReference type="EC" id="6.3.4.2"/>
    </reaction>
</comment>
<comment type="catalytic activity">
    <reaction evidence="1">
        <text>L-glutamine + H2O = L-glutamate + NH4(+)</text>
        <dbReference type="Rhea" id="RHEA:15889"/>
        <dbReference type="ChEBI" id="CHEBI:15377"/>
        <dbReference type="ChEBI" id="CHEBI:28938"/>
        <dbReference type="ChEBI" id="CHEBI:29985"/>
        <dbReference type="ChEBI" id="CHEBI:58359"/>
    </reaction>
</comment>
<comment type="catalytic activity">
    <reaction evidence="1">
        <text>UTP + NH4(+) + ATP = CTP + ADP + phosphate + 2 H(+)</text>
        <dbReference type="Rhea" id="RHEA:16597"/>
        <dbReference type="ChEBI" id="CHEBI:15378"/>
        <dbReference type="ChEBI" id="CHEBI:28938"/>
        <dbReference type="ChEBI" id="CHEBI:30616"/>
        <dbReference type="ChEBI" id="CHEBI:37563"/>
        <dbReference type="ChEBI" id="CHEBI:43474"/>
        <dbReference type="ChEBI" id="CHEBI:46398"/>
        <dbReference type="ChEBI" id="CHEBI:456216"/>
    </reaction>
</comment>
<comment type="activity regulation">
    <text evidence="1">Allosterically activated by GTP, when glutamine is the substrate; GTP has no effect on the reaction when ammonia is the substrate. The allosteric effector GTP functions by stabilizing the protein conformation that binds the tetrahedral intermediate(s) formed during glutamine hydrolysis. Inhibited by the product CTP, via allosteric rather than competitive inhibition.</text>
</comment>
<comment type="pathway">
    <text evidence="1">Pyrimidine metabolism; CTP biosynthesis via de novo pathway; CTP from UDP: step 2/2.</text>
</comment>
<comment type="subunit">
    <text evidence="1">Homotetramer.</text>
</comment>
<comment type="miscellaneous">
    <text evidence="1">CTPSs have evolved a hybrid strategy for distinguishing between UTP and CTP. The overlapping regions of the product feedback inhibitory and substrate sites recognize a common feature in both compounds, the triphosphate moiety. To differentiate isosteric substrate and product pyrimidine rings, an additional pocket far from the expected kinase/ligase catalytic site, specifically recognizes the cytosine and ribose portions of the product inhibitor.</text>
</comment>
<comment type="similarity">
    <text evidence="1">Belongs to the CTP synthase family.</text>
</comment>
<name>PYRG_LISMF</name>
<accession>Q71WM0</accession>
<proteinExistence type="inferred from homology"/>
<protein>
    <recommendedName>
        <fullName evidence="1">CTP synthase</fullName>
        <ecNumber evidence="1">6.3.4.2</ecNumber>
    </recommendedName>
    <alternativeName>
        <fullName evidence="1">Cytidine 5'-triphosphate synthase</fullName>
    </alternativeName>
    <alternativeName>
        <fullName evidence="1">Cytidine triphosphate synthetase</fullName>
        <shortName evidence="1">CTP synthetase</shortName>
        <shortName evidence="1">CTPS</shortName>
    </alternativeName>
    <alternativeName>
        <fullName evidence="1">UTP--ammonia ligase</fullName>
    </alternativeName>
</protein>
<dbReference type="EC" id="6.3.4.2" evidence="1"/>
<dbReference type="EMBL" id="AE017262">
    <property type="protein sequence ID" value="AAT05296.1"/>
    <property type="molecule type" value="Genomic_DNA"/>
</dbReference>
<dbReference type="RefSeq" id="WP_003726102.1">
    <property type="nucleotide sequence ID" value="NC_002973.6"/>
</dbReference>
<dbReference type="SMR" id="Q71WM0"/>
<dbReference type="KEGG" id="lmf:LMOf2365_2531"/>
<dbReference type="HOGENOM" id="CLU_011675_5_0_9"/>
<dbReference type="UniPathway" id="UPA00159">
    <property type="reaction ID" value="UER00277"/>
</dbReference>
<dbReference type="GO" id="GO:0005829">
    <property type="term" value="C:cytosol"/>
    <property type="evidence" value="ECO:0007669"/>
    <property type="project" value="TreeGrafter"/>
</dbReference>
<dbReference type="GO" id="GO:0005524">
    <property type="term" value="F:ATP binding"/>
    <property type="evidence" value="ECO:0007669"/>
    <property type="project" value="UniProtKB-KW"/>
</dbReference>
<dbReference type="GO" id="GO:0003883">
    <property type="term" value="F:CTP synthase activity"/>
    <property type="evidence" value="ECO:0007669"/>
    <property type="project" value="UniProtKB-UniRule"/>
</dbReference>
<dbReference type="GO" id="GO:0004359">
    <property type="term" value="F:glutaminase activity"/>
    <property type="evidence" value="ECO:0007669"/>
    <property type="project" value="RHEA"/>
</dbReference>
<dbReference type="GO" id="GO:0042802">
    <property type="term" value="F:identical protein binding"/>
    <property type="evidence" value="ECO:0007669"/>
    <property type="project" value="TreeGrafter"/>
</dbReference>
<dbReference type="GO" id="GO:0046872">
    <property type="term" value="F:metal ion binding"/>
    <property type="evidence" value="ECO:0007669"/>
    <property type="project" value="UniProtKB-KW"/>
</dbReference>
<dbReference type="GO" id="GO:0044210">
    <property type="term" value="P:'de novo' CTP biosynthetic process"/>
    <property type="evidence" value="ECO:0007669"/>
    <property type="project" value="UniProtKB-UniRule"/>
</dbReference>
<dbReference type="GO" id="GO:0019856">
    <property type="term" value="P:pyrimidine nucleobase biosynthetic process"/>
    <property type="evidence" value="ECO:0007669"/>
    <property type="project" value="TreeGrafter"/>
</dbReference>
<dbReference type="CDD" id="cd03113">
    <property type="entry name" value="CTPS_N"/>
    <property type="match status" value="1"/>
</dbReference>
<dbReference type="CDD" id="cd01746">
    <property type="entry name" value="GATase1_CTP_Synthase"/>
    <property type="match status" value="1"/>
</dbReference>
<dbReference type="FunFam" id="3.40.50.300:FF:000009">
    <property type="entry name" value="CTP synthase"/>
    <property type="match status" value="1"/>
</dbReference>
<dbReference type="FunFam" id="3.40.50.880:FF:000002">
    <property type="entry name" value="CTP synthase"/>
    <property type="match status" value="1"/>
</dbReference>
<dbReference type="Gene3D" id="3.40.50.880">
    <property type="match status" value="1"/>
</dbReference>
<dbReference type="Gene3D" id="3.40.50.300">
    <property type="entry name" value="P-loop containing nucleotide triphosphate hydrolases"/>
    <property type="match status" value="1"/>
</dbReference>
<dbReference type="HAMAP" id="MF_01227">
    <property type="entry name" value="PyrG"/>
    <property type="match status" value="1"/>
</dbReference>
<dbReference type="InterPro" id="IPR029062">
    <property type="entry name" value="Class_I_gatase-like"/>
</dbReference>
<dbReference type="InterPro" id="IPR004468">
    <property type="entry name" value="CTP_synthase"/>
</dbReference>
<dbReference type="InterPro" id="IPR017456">
    <property type="entry name" value="CTP_synthase_N"/>
</dbReference>
<dbReference type="InterPro" id="IPR017926">
    <property type="entry name" value="GATASE"/>
</dbReference>
<dbReference type="InterPro" id="IPR033828">
    <property type="entry name" value="GATase1_CTP_Synthase"/>
</dbReference>
<dbReference type="InterPro" id="IPR027417">
    <property type="entry name" value="P-loop_NTPase"/>
</dbReference>
<dbReference type="NCBIfam" id="NF003792">
    <property type="entry name" value="PRK05380.1"/>
    <property type="match status" value="1"/>
</dbReference>
<dbReference type="NCBIfam" id="TIGR00337">
    <property type="entry name" value="PyrG"/>
    <property type="match status" value="1"/>
</dbReference>
<dbReference type="PANTHER" id="PTHR11550">
    <property type="entry name" value="CTP SYNTHASE"/>
    <property type="match status" value="1"/>
</dbReference>
<dbReference type="PANTHER" id="PTHR11550:SF0">
    <property type="entry name" value="CTP SYNTHASE-RELATED"/>
    <property type="match status" value="1"/>
</dbReference>
<dbReference type="Pfam" id="PF06418">
    <property type="entry name" value="CTP_synth_N"/>
    <property type="match status" value="1"/>
</dbReference>
<dbReference type="Pfam" id="PF00117">
    <property type="entry name" value="GATase"/>
    <property type="match status" value="1"/>
</dbReference>
<dbReference type="SUPFAM" id="SSF52317">
    <property type="entry name" value="Class I glutamine amidotransferase-like"/>
    <property type="match status" value="1"/>
</dbReference>
<dbReference type="SUPFAM" id="SSF52540">
    <property type="entry name" value="P-loop containing nucleoside triphosphate hydrolases"/>
    <property type="match status" value="1"/>
</dbReference>
<dbReference type="PROSITE" id="PS51273">
    <property type="entry name" value="GATASE_TYPE_1"/>
    <property type="match status" value="1"/>
</dbReference>
<evidence type="ECO:0000255" key="1">
    <source>
        <dbReference type="HAMAP-Rule" id="MF_01227"/>
    </source>
</evidence>
<feature type="chain" id="PRO_0000138197" description="CTP synthase">
    <location>
        <begin position="1"/>
        <end position="532"/>
    </location>
</feature>
<feature type="domain" description="Glutamine amidotransferase type-1" evidence="1">
    <location>
        <begin position="292"/>
        <end position="532"/>
    </location>
</feature>
<feature type="region of interest" description="Amidoligase domain" evidence="1">
    <location>
        <begin position="1"/>
        <end position="267"/>
    </location>
</feature>
<feature type="active site" description="Nucleophile; for glutamine hydrolysis" evidence="1">
    <location>
        <position position="381"/>
    </location>
</feature>
<feature type="active site" evidence="1">
    <location>
        <position position="507"/>
    </location>
</feature>
<feature type="active site" evidence="1">
    <location>
        <position position="509"/>
    </location>
</feature>
<feature type="binding site" evidence="1">
    <location>
        <position position="13"/>
    </location>
    <ligand>
        <name>CTP</name>
        <dbReference type="ChEBI" id="CHEBI:37563"/>
        <note>allosteric inhibitor</note>
    </ligand>
</feature>
<feature type="binding site" evidence="1">
    <location>
        <position position="13"/>
    </location>
    <ligand>
        <name>UTP</name>
        <dbReference type="ChEBI" id="CHEBI:46398"/>
    </ligand>
</feature>
<feature type="binding site" evidence="1">
    <location>
        <begin position="14"/>
        <end position="19"/>
    </location>
    <ligand>
        <name>ATP</name>
        <dbReference type="ChEBI" id="CHEBI:30616"/>
    </ligand>
</feature>
<feature type="binding site" evidence="1">
    <location>
        <position position="54"/>
    </location>
    <ligand>
        <name>L-glutamine</name>
        <dbReference type="ChEBI" id="CHEBI:58359"/>
    </ligand>
</feature>
<feature type="binding site" evidence="1">
    <location>
        <position position="71"/>
    </location>
    <ligand>
        <name>ATP</name>
        <dbReference type="ChEBI" id="CHEBI:30616"/>
    </ligand>
</feature>
<feature type="binding site" evidence="1">
    <location>
        <position position="71"/>
    </location>
    <ligand>
        <name>Mg(2+)</name>
        <dbReference type="ChEBI" id="CHEBI:18420"/>
    </ligand>
</feature>
<feature type="binding site" evidence="1">
    <location>
        <position position="141"/>
    </location>
    <ligand>
        <name>Mg(2+)</name>
        <dbReference type="ChEBI" id="CHEBI:18420"/>
    </ligand>
</feature>
<feature type="binding site" evidence="1">
    <location>
        <begin position="148"/>
        <end position="150"/>
    </location>
    <ligand>
        <name>CTP</name>
        <dbReference type="ChEBI" id="CHEBI:37563"/>
        <note>allosteric inhibitor</note>
    </ligand>
</feature>
<feature type="binding site" evidence="1">
    <location>
        <begin position="188"/>
        <end position="193"/>
    </location>
    <ligand>
        <name>CTP</name>
        <dbReference type="ChEBI" id="CHEBI:37563"/>
        <note>allosteric inhibitor</note>
    </ligand>
</feature>
<feature type="binding site" evidence="1">
    <location>
        <begin position="188"/>
        <end position="193"/>
    </location>
    <ligand>
        <name>UTP</name>
        <dbReference type="ChEBI" id="CHEBI:46398"/>
    </ligand>
</feature>
<feature type="binding site" evidence="1">
    <location>
        <position position="224"/>
    </location>
    <ligand>
        <name>CTP</name>
        <dbReference type="ChEBI" id="CHEBI:37563"/>
        <note>allosteric inhibitor</note>
    </ligand>
</feature>
<feature type="binding site" evidence="1">
    <location>
        <position position="224"/>
    </location>
    <ligand>
        <name>UTP</name>
        <dbReference type="ChEBI" id="CHEBI:46398"/>
    </ligand>
</feature>
<feature type="binding site" evidence="1">
    <location>
        <position position="354"/>
    </location>
    <ligand>
        <name>L-glutamine</name>
        <dbReference type="ChEBI" id="CHEBI:58359"/>
    </ligand>
</feature>
<feature type="binding site" evidence="1">
    <location>
        <begin position="382"/>
        <end position="385"/>
    </location>
    <ligand>
        <name>L-glutamine</name>
        <dbReference type="ChEBI" id="CHEBI:58359"/>
    </ligand>
</feature>
<feature type="binding site" evidence="1">
    <location>
        <position position="405"/>
    </location>
    <ligand>
        <name>L-glutamine</name>
        <dbReference type="ChEBI" id="CHEBI:58359"/>
    </ligand>
</feature>
<feature type="binding site" evidence="1">
    <location>
        <position position="462"/>
    </location>
    <ligand>
        <name>L-glutamine</name>
        <dbReference type="ChEBI" id="CHEBI:58359"/>
    </ligand>
</feature>
<reference key="1">
    <citation type="journal article" date="2004" name="Nucleic Acids Res.">
        <title>Whole genome comparisons of serotype 4b and 1/2a strains of the food-borne pathogen Listeria monocytogenes reveal new insights into the core genome components of this species.</title>
        <authorList>
            <person name="Nelson K.E."/>
            <person name="Fouts D.E."/>
            <person name="Mongodin E.F."/>
            <person name="Ravel J."/>
            <person name="DeBoy R.T."/>
            <person name="Kolonay J.F."/>
            <person name="Rasko D.A."/>
            <person name="Angiuoli S.V."/>
            <person name="Gill S.R."/>
            <person name="Paulsen I.T."/>
            <person name="Peterson J.D."/>
            <person name="White O."/>
            <person name="Nelson W.C."/>
            <person name="Nierman W.C."/>
            <person name="Beanan M.J."/>
            <person name="Brinkac L.M."/>
            <person name="Daugherty S.C."/>
            <person name="Dodson R.J."/>
            <person name="Durkin A.S."/>
            <person name="Madupu R."/>
            <person name="Haft D.H."/>
            <person name="Selengut J."/>
            <person name="Van Aken S.E."/>
            <person name="Khouri H.M."/>
            <person name="Fedorova N."/>
            <person name="Forberger H.A."/>
            <person name="Tran B."/>
            <person name="Kathariou S."/>
            <person name="Wonderling L.D."/>
            <person name="Uhlich G.A."/>
            <person name="Bayles D.O."/>
            <person name="Luchansky J.B."/>
            <person name="Fraser C.M."/>
        </authorList>
    </citation>
    <scope>NUCLEOTIDE SEQUENCE [LARGE SCALE GENOMIC DNA]</scope>
    <source>
        <strain>F2365</strain>
    </source>
</reference>
<organism>
    <name type="scientific">Listeria monocytogenes serotype 4b (strain F2365)</name>
    <dbReference type="NCBI Taxonomy" id="265669"/>
    <lineage>
        <taxon>Bacteria</taxon>
        <taxon>Bacillati</taxon>
        <taxon>Bacillota</taxon>
        <taxon>Bacilli</taxon>
        <taxon>Bacillales</taxon>
        <taxon>Listeriaceae</taxon>
        <taxon>Listeria</taxon>
    </lineage>
</organism>
<keyword id="KW-0067">ATP-binding</keyword>
<keyword id="KW-0315">Glutamine amidotransferase</keyword>
<keyword id="KW-0436">Ligase</keyword>
<keyword id="KW-0460">Magnesium</keyword>
<keyword id="KW-0479">Metal-binding</keyword>
<keyword id="KW-0547">Nucleotide-binding</keyword>
<keyword id="KW-0665">Pyrimidine biosynthesis</keyword>